<name>BDS5_ANEVI</name>
<keyword id="KW-0165">Cleavage on pair of basic residues</keyword>
<keyword id="KW-0903">Direct protein sequencing</keyword>
<keyword id="KW-1015">Disulfide bond</keyword>
<keyword id="KW-0382">Hypotensive agent</keyword>
<keyword id="KW-0872">Ion channel impairing toxin</keyword>
<keyword id="KW-0166">Nematocyst</keyword>
<keyword id="KW-0528">Neurotoxin</keyword>
<keyword id="KW-0632">Potassium channel impairing toxin</keyword>
<keyword id="KW-0964">Secreted</keyword>
<keyword id="KW-0732">Signal</keyword>
<keyword id="KW-0800">Toxin</keyword>
<keyword id="KW-1220">Voltage-gated potassium channel impairing toxin</keyword>
<comment type="function">
    <text evidence="1 5 9">Is member of a fraction that shows antiangiogenic activity, since it inhibits human microvascular endothelial cells (HMEC) tubulogenesis (PubMed:29671760). This protein could be a kunitz-type inhibitor with a RGD motif that could block angiogenesis in binding on integrins (Probable). Blocks Kv3 voltage-gated potassium channels (By similarity). Reduces blood pressure (By similarity).</text>
</comment>
<comment type="subcellular location">
    <subcellularLocation>
        <location evidence="8">Secreted</location>
    </subcellularLocation>
    <subcellularLocation>
        <location evidence="8">Nematocyst</location>
    </subcellularLocation>
</comment>
<comment type="tissue specificity">
    <text evidence="4">Moderately expressed in the ectodermal tissue from the distal and proximal tentacles, body wall, and oral disk.</text>
</comment>
<comment type="mass spectrometry"/>
<comment type="miscellaneous">
    <text evidence="9">In contrast to BDS-1, may have an alpha-helix which could be located at the C-terminal domain.</text>
</comment>
<comment type="similarity">
    <text evidence="8">Belongs to the sea anemone type 3 (BDS) potassium channel toxin family.</text>
</comment>
<comment type="caution">
    <text evidence="8">Opinions are divided on whether Anemonia viridis (Forsskal, 1775) and Anemonia sulcata (Pennant, 1777) are separate species.</text>
</comment>
<feature type="signal peptide" evidence="2">
    <location>
        <begin position="1"/>
        <end position="19"/>
    </location>
</feature>
<feature type="propeptide" id="PRO_0000433654" evidence="9">
    <location>
        <begin position="20"/>
        <end position="31"/>
    </location>
</feature>
<feature type="chain" id="PRO_0000433655" description="Kappa-actitoxin-Avd4e" evidence="5">
    <location>
        <begin position="34"/>
        <end position="76"/>
    </location>
</feature>
<feature type="short sequence motif" description="Cell attachment site" evidence="3">
    <location>
        <begin position="45"/>
        <end position="47"/>
    </location>
</feature>
<feature type="disulfide bond" evidence="5">
    <location>
        <begin position="37"/>
        <end position="72"/>
    </location>
</feature>
<feature type="disulfide bond" evidence="5">
    <location>
        <begin position="39"/>
        <end position="65"/>
    </location>
</feature>
<feature type="disulfide bond" evidence="5">
    <location>
        <begin position="55"/>
        <end position="73"/>
    </location>
</feature>
<proteinExistence type="evidence at protein level"/>
<evidence type="ECO:0000250" key="1">
    <source>
        <dbReference type="UniProtKB" id="P11494"/>
    </source>
</evidence>
<evidence type="ECO:0000255" key="2"/>
<evidence type="ECO:0000255" key="3">
    <source>
        <dbReference type="PROSITE-ProRule" id="PRU00293"/>
    </source>
</evidence>
<evidence type="ECO:0000269" key="4">
    <source>
    </source>
</evidence>
<evidence type="ECO:0000269" key="5">
    <source>
    </source>
</evidence>
<evidence type="ECO:0000303" key="6">
    <source>
    </source>
</evidence>
<evidence type="ECO:0000303" key="7">
    <source>
    </source>
</evidence>
<evidence type="ECO:0000305" key="8"/>
<evidence type="ECO:0000305" key="9">
    <source>
    </source>
</evidence>
<dbReference type="EMBL" id="FK720902">
    <property type="status" value="NOT_ANNOTATED_CDS"/>
    <property type="molecule type" value="mRNA"/>
</dbReference>
<dbReference type="EMBL" id="FK737121">
    <property type="status" value="NOT_ANNOTATED_CDS"/>
    <property type="molecule type" value="mRNA"/>
</dbReference>
<dbReference type="EMBL" id="FK755577">
    <property type="status" value="NOT_ANNOTATED_CDS"/>
    <property type="molecule type" value="mRNA"/>
</dbReference>
<dbReference type="EMBL" id="FK758510">
    <property type="status" value="NOT_ANNOTATED_CDS"/>
    <property type="molecule type" value="mRNA"/>
</dbReference>
<dbReference type="SMR" id="P0DMX9"/>
<dbReference type="GO" id="GO:0005576">
    <property type="term" value="C:extracellular region"/>
    <property type="evidence" value="ECO:0007669"/>
    <property type="project" value="UniProtKB-SubCell"/>
</dbReference>
<dbReference type="GO" id="GO:0042151">
    <property type="term" value="C:nematocyst"/>
    <property type="evidence" value="ECO:0007669"/>
    <property type="project" value="UniProtKB-SubCell"/>
</dbReference>
<dbReference type="GO" id="GO:0008200">
    <property type="term" value="F:ion channel inhibitor activity"/>
    <property type="evidence" value="ECO:0007669"/>
    <property type="project" value="InterPro"/>
</dbReference>
<dbReference type="GO" id="GO:0015459">
    <property type="term" value="F:potassium channel regulator activity"/>
    <property type="evidence" value="ECO:0007669"/>
    <property type="project" value="UniProtKB-KW"/>
</dbReference>
<dbReference type="GO" id="GO:0090729">
    <property type="term" value="F:toxin activity"/>
    <property type="evidence" value="ECO:0007669"/>
    <property type="project" value="UniProtKB-KW"/>
</dbReference>
<dbReference type="GO" id="GO:0008217">
    <property type="term" value="P:regulation of blood pressure"/>
    <property type="evidence" value="ECO:0007669"/>
    <property type="project" value="UniProtKB-KW"/>
</dbReference>
<dbReference type="Gene3D" id="2.20.20.10">
    <property type="entry name" value="Anthopleurin-A"/>
    <property type="match status" value="1"/>
</dbReference>
<dbReference type="InterPro" id="IPR012414">
    <property type="entry name" value="BDS_K_chnl_tox"/>
</dbReference>
<dbReference type="InterPro" id="IPR023355">
    <property type="entry name" value="Myo_ane_neurotoxin_sf"/>
</dbReference>
<dbReference type="Pfam" id="PF07936">
    <property type="entry name" value="Defensin_4"/>
    <property type="match status" value="1"/>
</dbReference>
<dbReference type="SUPFAM" id="SSF57392">
    <property type="entry name" value="Defensin-like"/>
    <property type="match status" value="1"/>
</dbReference>
<accession>P0DMX9</accession>
<reference key="1">
    <citation type="journal article" date="2009" name="BMC Genomics">
        <title>Comprehensive EST analysis of the symbiotic sea anemone, Anemonia viridis.</title>
        <authorList>
            <person name="Sabourault C."/>
            <person name="Ganot P."/>
            <person name="Deleury E."/>
            <person name="Allemand D."/>
            <person name="Furla P."/>
        </authorList>
    </citation>
    <scope>NUCLEOTIDE SEQUENCE [MRNA]</scope>
</reference>
<reference key="2">
    <citation type="journal article" date="2018" name="Mar. Drugs">
        <title>A low molecular weight protein from the sea anemone anemonia viridis with an anti-angiogenic activity.</title>
        <authorList>
            <person name="Loret E.P."/>
            <person name="Luis J."/>
            <person name="Nuccio C."/>
            <person name="Villard C."/>
            <person name="Mansuelle P."/>
            <person name="Lebrun R."/>
            <person name="Villard P.H."/>
        </authorList>
    </citation>
    <scope>PROTEIN SEQUENCE OF 34-76</scope>
    <scope>DISULFIDE BOND</scope>
    <scope>MASS SPECTROMETRY</scope>
    <scope>3D-STRUCTURE MODELING</scope>
</reference>
<reference key="3">
    <citation type="journal article" date="2011" name="BMC Genomics">
        <title>The mining of toxin-like polypeptides from EST database by single residue distribution analysis.</title>
        <authorList>
            <person name="Kozlov S."/>
            <person name="Grishin E."/>
        </authorList>
    </citation>
    <scope>NOMENCLATURE</scope>
</reference>
<reference key="4">
    <citation type="journal article" date="2012" name="Toxicon">
        <title>Development of a rational nomenclature for naming peptide and protein toxins from sea anemones.</title>
        <authorList>
            <person name="Oliveira J.S."/>
            <person name="Fuentes-Silva D."/>
            <person name="King G.F."/>
        </authorList>
    </citation>
    <scope>NOMENCLATURE</scope>
</reference>
<reference key="5">
    <citation type="journal article" date="2013" name="Mar. Drugs">
        <title>Evidence of accelerated evolution and ectodermal-specific expression of presumptive BDS toxin cDNAs from Anemonia viridis.</title>
        <authorList>
            <person name="Nicosia A."/>
            <person name="Maggio T."/>
            <person name="Mazzola S."/>
            <person name="Cuttitta A."/>
        </authorList>
    </citation>
    <scope>3D-STRUCTURE MODELING</scope>
    <scope>TISSUE SPECIFICITY</scope>
</reference>
<protein>
    <recommendedName>
        <fullName evidence="7">Kappa-actitoxin-Avd4e</fullName>
        <shortName evidence="7">Kappa-AITX-Avd4e</shortName>
    </recommendedName>
    <alternativeName>
        <fullName evidence="8">Antihypertensive protein BDS-5</fullName>
    </alternativeName>
    <alternativeName>
        <fullName evidence="6">Blood depressing substance 5</fullName>
        <shortName evidence="6">BDS-5</shortName>
    </alternativeName>
</protein>
<sequence>MNKALFLCLVVLCAAVVFAAEDLQKAKHAPFKRAAPCFCSGKPGRGDLWIFRGTCPGGYGYTSNCYKWPNICCYPH</sequence>
<organism>
    <name type="scientific">Anemonia viridis</name>
    <name type="common">Snakelocks anemone</name>
    <dbReference type="NCBI Taxonomy" id="51769"/>
    <lineage>
        <taxon>Eukaryota</taxon>
        <taxon>Metazoa</taxon>
        <taxon>Cnidaria</taxon>
        <taxon>Anthozoa</taxon>
        <taxon>Hexacorallia</taxon>
        <taxon>Actiniaria</taxon>
        <taxon>Actiniidae</taxon>
        <taxon>Anemonia</taxon>
    </lineage>
</organism>